<reference key="1">
    <citation type="journal article" date="1999" name="Proc. Natl. Acad. Sci. U.S.A.">
        <title>Characterization of otoconin-95, the major protein of murine otoconia, provides insights into the formation of these inner ear biominerals.</title>
        <authorList>
            <person name="Verpy E."/>
            <person name="Leibovici M."/>
            <person name="Petit C."/>
        </authorList>
    </citation>
    <scope>NUCLEOTIDE SEQUENCE [MRNA] (ISOFORMS 1; 2; 3 AND 4)</scope>
    <scope>TISSUE SPECIFICITY</scope>
    <scope>DEVELOPMENTAL STAGE</scope>
    <source>
        <strain>BALB/cJ</strain>
        <tissue>Cochlea</tissue>
    </source>
</reference>
<reference key="2">
    <citation type="journal article" date="2005" name="Science">
        <title>The transcriptional landscape of the mammalian genome.</title>
        <authorList>
            <person name="Carninci P."/>
            <person name="Kasukawa T."/>
            <person name="Katayama S."/>
            <person name="Gough J."/>
            <person name="Frith M.C."/>
            <person name="Maeda N."/>
            <person name="Oyama R."/>
            <person name="Ravasi T."/>
            <person name="Lenhard B."/>
            <person name="Wells C."/>
            <person name="Kodzius R."/>
            <person name="Shimokawa K."/>
            <person name="Bajic V.B."/>
            <person name="Brenner S.E."/>
            <person name="Batalov S."/>
            <person name="Forrest A.R."/>
            <person name="Zavolan M."/>
            <person name="Davis M.J."/>
            <person name="Wilming L.G."/>
            <person name="Aidinis V."/>
            <person name="Allen J.E."/>
            <person name="Ambesi-Impiombato A."/>
            <person name="Apweiler R."/>
            <person name="Aturaliya R.N."/>
            <person name="Bailey T.L."/>
            <person name="Bansal M."/>
            <person name="Baxter L."/>
            <person name="Beisel K.W."/>
            <person name="Bersano T."/>
            <person name="Bono H."/>
            <person name="Chalk A.M."/>
            <person name="Chiu K.P."/>
            <person name="Choudhary V."/>
            <person name="Christoffels A."/>
            <person name="Clutterbuck D.R."/>
            <person name="Crowe M.L."/>
            <person name="Dalla E."/>
            <person name="Dalrymple B.P."/>
            <person name="de Bono B."/>
            <person name="Della Gatta G."/>
            <person name="di Bernardo D."/>
            <person name="Down T."/>
            <person name="Engstrom P."/>
            <person name="Fagiolini M."/>
            <person name="Faulkner G."/>
            <person name="Fletcher C.F."/>
            <person name="Fukushima T."/>
            <person name="Furuno M."/>
            <person name="Futaki S."/>
            <person name="Gariboldi M."/>
            <person name="Georgii-Hemming P."/>
            <person name="Gingeras T.R."/>
            <person name="Gojobori T."/>
            <person name="Green R.E."/>
            <person name="Gustincich S."/>
            <person name="Harbers M."/>
            <person name="Hayashi Y."/>
            <person name="Hensch T.K."/>
            <person name="Hirokawa N."/>
            <person name="Hill D."/>
            <person name="Huminiecki L."/>
            <person name="Iacono M."/>
            <person name="Ikeo K."/>
            <person name="Iwama A."/>
            <person name="Ishikawa T."/>
            <person name="Jakt M."/>
            <person name="Kanapin A."/>
            <person name="Katoh M."/>
            <person name="Kawasawa Y."/>
            <person name="Kelso J."/>
            <person name="Kitamura H."/>
            <person name="Kitano H."/>
            <person name="Kollias G."/>
            <person name="Krishnan S.P."/>
            <person name="Kruger A."/>
            <person name="Kummerfeld S.K."/>
            <person name="Kurochkin I.V."/>
            <person name="Lareau L.F."/>
            <person name="Lazarevic D."/>
            <person name="Lipovich L."/>
            <person name="Liu J."/>
            <person name="Liuni S."/>
            <person name="McWilliam S."/>
            <person name="Madan Babu M."/>
            <person name="Madera M."/>
            <person name="Marchionni L."/>
            <person name="Matsuda H."/>
            <person name="Matsuzawa S."/>
            <person name="Miki H."/>
            <person name="Mignone F."/>
            <person name="Miyake S."/>
            <person name="Morris K."/>
            <person name="Mottagui-Tabar S."/>
            <person name="Mulder N."/>
            <person name="Nakano N."/>
            <person name="Nakauchi H."/>
            <person name="Ng P."/>
            <person name="Nilsson R."/>
            <person name="Nishiguchi S."/>
            <person name="Nishikawa S."/>
            <person name="Nori F."/>
            <person name="Ohara O."/>
            <person name="Okazaki Y."/>
            <person name="Orlando V."/>
            <person name="Pang K.C."/>
            <person name="Pavan W.J."/>
            <person name="Pavesi G."/>
            <person name="Pesole G."/>
            <person name="Petrovsky N."/>
            <person name="Piazza S."/>
            <person name="Reed J."/>
            <person name="Reid J.F."/>
            <person name="Ring B.Z."/>
            <person name="Ringwald M."/>
            <person name="Rost B."/>
            <person name="Ruan Y."/>
            <person name="Salzberg S.L."/>
            <person name="Sandelin A."/>
            <person name="Schneider C."/>
            <person name="Schoenbach C."/>
            <person name="Sekiguchi K."/>
            <person name="Semple C.A."/>
            <person name="Seno S."/>
            <person name="Sessa L."/>
            <person name="Sheng Y."/>
            <person name="Shibata Y."/>
            <person name="Shimada H."/>
            <person name="Shimada K."/>
            <person name="Silva D."/>
            <person name="Sinclair B."/>
            <person name="Sperling S."/>
            <person name="Stupka E."/>
            <person name="Sugiura K."/>
            <person name="Sultana R."/>
            <person name="Takenaka Y."/>
            <person name="Taki K."/>
            <person name="Tammoja K."/>
            <person name="Tan S.L."/>
            <person name="Tang S."/>
            <person name="Taylor M.S."/>
            <person name="Tegner J."/>
            <person name="Teichmann S.A."/>
            <person name="Ueda H.R."/>
            <person name="van Nimwegen E."/>
            <person name="Verardo R."/>
            <person name="Wei C.L."/>
            <person name="Yagi K."/>
            <person name="Yamanishi H."/>
            <person name="Zabarovsky E."/>
            <person name="Zhu S."/>
            <person name="Zimmer A."/>
            <person name="Hide W."/>
            <person name="Bult C."/>
            <person name="Grimmond S.M."/>
            <person name="Teasdale R.D."/>
            <person name="Liu E.T."/>
            <person name="Brusic V."/>
            <person name="Quackenbush J."/>
            <person name="Wahlestedt C."/>
            <person name="Mattick J.S."/>
            <person name="Hume D.A."/>
            <person name="Kai C."/>
            <person name="Sasaki D."/>
            <person name="Tomaru Y."/>
            <person name="Fukuda S."/>
            <person name="Kanamori-Katayama M."/>
            <person name="Suzuki M."/>
            <person name="Aoki J."/>
            <person name="Arakawa T."/>
            <person name="Iida J."/>
            <person name="Imamura K."/>
            <person name="Itoh M."/>
            <person name="Kato T."/>
            <person name="Kawaji H."/>
            <person name="Kawagashira N."/>
            <person name="Kawashima T."/>
            <person name="Kojima M."/>
            <person name="Kondo S."/>
            <person name="Konno H."/>
            <person name="Nakano K."/>
            <person name="Ninomiya N."/>
            <person name="Nishio T."/>
            <person name="Okada M."/>
            <person name="Plessy C."/>
            <person name="Shibata K."/>
            <person name="Shiraki T."/>
            <person name="Suzuki S."/>
            <person name="Tagami M."/>
            <person name="Waki K."/>
            <person name="Watahiki A."/>
            <person name="Okamura-Oho Y."/>
            <person name="Suzuki H."/>
            <person name="Kawai J."/>
            <person name="Hayashizaki Y."/>
        </authorList>
    </citation>
    <scope>NUCLEOTIDE SEQUENCE [LARGE SCALE MRNA] (ISOFORM 1)</scope>
    <source>
        <strain>C57BL/6J</strain>
        <tissue>Embryo</tissue>
    </source>
</reference>
<reference key="3">
    <citation type="journal article" date="1998" name="Proc. Natl. Acad. Sci. U.S.A.">
        <title>Otoconin-90, the mammalian otoconial matrix protein, contains two domains of homology to secretory phospholipase A2.</title>
        <authorList>
            <person name="Wang Y."/>
            <person name="Kowalski P.E."/>
            <person name="Thalmann I."/>
            <person name="Ornitz D.M."/>
            <person name="Mager D.L."/>
            <person name="Thalmann R."/>
        </authorList>
    </citation>
    <scope>NUCLEOTIDE SEQUENCE [GENOMIC DNA / MRNA] OF 18-485 (ISOFORM 5)</scope>
    <scope>PROTEIN SEQUENCE OF 18-63</scope>
    <source>
        <strain>C57BL/6J</strain>
        <strain>Swiss Webster</strain>
    </source>
</reference>
<reference key="4">
    <citation type="journal article" date="2007" name="Dev. Biol.">
        <title>Gene targeting reveals the role of Oc90 as the essential organizer of the otoconial organic matrix.</title>
        <authorList>
            <person name="Zhao X."/>
            <person name="Yang H."/>
            <person name="Yamoah E.N."/>
            <person name="Lundberg Y.W."/>
        </authorList>
    </citation>
    <scope>FUNCTION</scope>
    <scope>INTERACTION WITH OTOL1</scope>
</reference>
<reference key="5">
    <citation type="journal article" date="2010" name="PLoS ONE">
        <title>Mammalian Otolin: a multimeric glycoprotein specific to the inner ear that interacts with otoconial matrix protein Otoconin-90 and Cerebellin-1.</title>
        <authorList>
            <person name="Deans M.R."/>
            <person name="Peterson J.M."/>
            <person name="Wong G.W."/>
        </authorList>
    </citation>
    <scope>INTERACTION WITH OTOL1</scope>
</reference>
<reference key="6">
    <citation type="journal article" date="2011" name="PLoS ONE">
        <title>Matrix recruitment and calcium sequestration for spatial specific otoconia development.</title>
        <authorList>
            <person name="Yang H."/>
            <person name="Zhao X."/>
            <person name="Xu Y."/>
            <person name="Wang L."/>
            <person name="He Q."/>
            <person name="Lundberg Y.W."/>
        </authorList>
    </citation>
    <scope>FUNCTION</scope>
    <scope>DISRUPTION PHENOTYPE</scope>
    <scope>CALCIUM-BINDING</scope>
    <scope>INTERACTION WITH OTOL1</scope>
</reference>
<reference key="7">
    <citation type="journal article" date="2014" name="PLoS ONE">
        <title>In vitro calcite crystal morphology is modulated by otoconial proteins otolin-1 and otoconin-90.</title>
        <authorList>
            <person name="Moreland K.T."/>
            <person name="Hong M."/>
            <person name="Lu W."/>
            <person name="Rowley C.W."/>
            <person name="Ornitz D.M."/>
            <person name="De Yoreo J.J."/>
            <person name="Thalmann R."/>
        </authorList>
    </citation>
    <scope>FUNCTION</scope>
    <scope>CALCIUM-BINDING</scope>
</reference>
<evidence type="ECO:0000250" key="1"/>
<evidence type="ECO:0000250" key="2">
    <source>
        <dbReference type="UniProtKB" id="P81869"/>
    </source>
</evidence>
<evidence type="ECO:0000255" key="3"/>
<evidence type="ECO:0000256" key="4">
    <source>
        <dbReference type="SAM" id="MobiDB-lite"/>
    </source>
</evidence>
<evidence type="ECO:0000269" key="5">
    <source>
    </source>
</evidence>
<evidence type="ECO:0000269" key="6">
    <source>
    </source>
</evidence>
<evidence type="ECO:0000269" key="7">
    <source>
    </source>
</evidence>
<evidence type="ECO:0000269" key="8">
    <source>
    </source>
</evidence>
<evidence type="ECO:0000269" key="9">
    <source>
    </source>
</evidence>
<evidence type="ECO:0000269" key="10">
    <source>
    </source>
</evidence>
<evidence type="ECO:0000303" key="11">
    <source>
    </source>
</evidence>
<evidence type="ECO:0000303" key="12">
    <source>
    </source>
</evidence>
<evidence type="ECO:0000305" key="13"/>
<evidence type="ECO:0000312" key="14">
    <source>
        <dbReference type="MGI" id="MGI:1313269"/>
    </source>
</evidence>
<comment type="function">
    <text evidence="5 7 8">Major protein of the otoconia, a calcium carbonate structure in the saccule and utricle of the ear (PubMed:17300776). Together with OTOL1, acts as a scaffold for otoconia biomineralization: sequesters calcium and forms interconnecting fibrils between otoconia that are incorporated into the calcium crystal structure (PubMed:21655225, PubMed:24748133). Together with OTOL1, modulates calcite crystal morphology and growth kinetics (PubMed:24748133). It is unlikely that this protein has phospholipase A2 activity (PubMed:17300776).</text>
</comment>
<comment type="subunit">
    <text evidence="5 6 7">Interacts with OTOL1.</text>
</comment>
<comment type="subcellular location">
    <subcellularLocation>
        <location evidence="2">Secreted</location>
    </subcellularLocation>
</comment>
<comment type="alternative products">
    <event type="alternative splicing"/>
    <isoform>
        <id>Q9Z0L3-1</id>
        <name>1</name>
        <sequence type="displayed"/>
    </isoform>
    <isoform>
        <id>Q9Z0L3-2</id>
        <name>2</name>
        <sequence type="described" ref="VSP_004510"/>
    </isoform>
    <isoform>
        <id>Q9Z0L3-3</id>
        <name>3</name>
        <sequence type="described" ref="VSP_004511 VSP_004513"/>
    </isoform>
    <isoform>
        <id>Q9Z0L3-4</id>
        <name>4</name>
        <sequence type="described" ref="VSP_004515"/>
    </isoform>
    <isoform>
        <id>Q9Z0L3-5</id>
        <name>5</name>
        <sequence type="described" ref="VSP_004512 VSP_004514"/>
    </isoform>
</comment>
<comment type="tissue specificity">
    <text evidence="10">In the embryo, highly expressed in the developing otocyst with weak expression in the brain. Also expressed in nonsensory epithelia of both the vestibular and cochlear portions of the developing inner ear. Not expressed in adult or embryonic macular sensory epithelia.</text>
</comment>
<comment type="developmental stage">
    <text evidence="10">Expressed from embryonic day 9.5.</text>
</comment>
<comment type="domain">
    <text>Consists of 3 PA2-type domains.</text>
</comment>
<comment type="disruption phenotype">
    <text evidence="7">Otoconia show a strongly reduced matrix-calcium.</text>
</comment>
<comment type="similarity">
    <text evidence="13">Belongs to the phospholipase A2 family.</text>
</comment>
<sequence>MIMLLMVGMLMAPCVGAHALDTPNPQELPPGLSKNINITFFNGVFKNVESVAEIFDCLGSHFTWLQAVFTNFPLLLQFVNSMRCVTGLCPRDFEDYGCACRFEMEGMPVDESDICCFQHRRCYEEAVEMDCLQDPAKLSADVDCTNKQITCESEDPCERLLCTCDKAAVECLAQSGINSSLNFLDASFCLPQTPETTSGKAATLLPRGIPEKPTDTSQIALSGEVAGEVRADTLTTLSRTKSVQDLQDTQASRTTSSPGSAEIIALAKGTTHSAGIKPLRLGVSSVDNGSQEAAGKACDRLAFVHLGDGDSMTAMLQLGEMLFCLTSHCPEEFETYGCYCGREGRGEPRDTLDRCCLSHHCCLEQMRQVGCLHGRRSQSSVVCEDHMAKCVGQSLCEKLLCACDQMAAECMASAFFNQSLKSPDGAECQGEPVSCEDGMLQGTLASSVDSSSEENSEEAPPQMERLRRFLEKPPGPLGARPLGGK</sequence>
<proteinExistence type="evidence at protein level"/>
<gene>
    <name evidence="14" type="primary">Oc90</name>
    <name evidence="12" type="synonym">Onc-95</name>
    <name type="synonym">Pla2ll</name>
</gene>
<dbReference type="EMBL" id="AF093591">
    <property type="protein sequence ID" value="AAD08924.1"/>
    <property type="molecule type" value="mRNA"/>
</dbReference>
<dbReference type="EMBL" id="AF091846">
    <property type="protein sequence ID" value="AAC99455.1"/>
    <property type="molecule type" value="mRNA"/>
</dbReference>
<dbReference type="EMBL" id="AF091847">
    <property type="protein sequence ID" value="AAC99456.1"/>
    <property type="molecule type" value="Genomic_DNA"/>
</dbReference>
<dbReference type="EMBL" id="AK012981">
    <property type="protein sequence ID" value="BAB28578.1"/>
    <property type="molecule type" value="mRNA"/>
</dbReference>
<dbReference type="CCDS" id="CCDS27508.1">
    <molecule id="Q9Z0L3-1"/>
</dbReference>
<dbReference type="RefSeq" id="NP_001398383.1">
    <molecule id="Q9Z0L3-5"/>
    <property type="nucleotide sequence ID" value="NM_001411454.1"/>
</dbReference>
<dbReference type="RefSeq" id="NP_035083.1">
    <molecule id="Q9Z0L3-1"/>
    <property type="nucleotide sequence ID" value="NM_010953.3"/>
</dbReference>
<dbReference type="RefSeq" id="XP_011243792.1">
    <property type="nucleotide sequence ID" value="XM_011245490.1"/>
</dbReference>
<dbReference type="SMR" id="Q9Z0L3"/>
<dbReference type="BioGRID" id="201892">
    <property type="interactions" value="1"/>
</dbReference>
<dbReference type="FunCoup" id="Q9Z0L3">
    <property type="interactions" value="96"/>
</dbReference>
<dbReference type="IntAct" id="Q9Z0L3">
    <property type="interactions" value="1"/>
</dbReference>
<dbReference type="STRING" id="10090.ENSMUSP00000062865"/>
<dbReference type="GlyCosmos" id="Q9Z0L3">
    <property type="glycosylation" value="4 sites, No reported glycans"/>
</dbReference>
<dbReference type="GlyGen" id="Q9Z0L3">
    <property type="glycosylation" value="4 sites"/>
</dbReference>
<dbReference type="iPTMnet" id="Q9Z0L3"/>
<dbReference type="PhosphoSitePlus" id="Q9Z0L3"/>
<dbReference type="PaxDb" id="10090-ENSMUSP00000062865"/>
<dbReference type="DNASU" id="18256"/>
<dbReference type="Ensembl" id="ENSMUST00000060522.11">
    <molecule id="Q9Z0L3-1"/>
    <property type="protein sequence ID" value="ENSMUSP00000062865.5"/>
    <property type="gene ID" value="ENSMUSG00000015001.18"/>
</dbReference>
<dbReference type="GeneID" id="18256"/>
<dbReference type="KEGG" id="mmu:18256"/>
<dbReference type="UCSC" id="uc007vzx.2">
    <molecule id="Q9Z0L3-1"/>
    <property type="organism name" value="mouse"/>
</dbReference>
<dbReference type="AGR" id="MGI:1313269"/>
<dbReference type="CTD" id="729330"/>
<dbReference type="MGI" id="MGI:1313269">
    <property type="gene designation" value="Oc90"/>
</dbReference>
<dbReference type="VEuPathDB" id="HostDB:ENSMUSG00000015001"/>
<dbReference type="eggNOG" id="KOG4087">
    <property type="taxonomic scope" value="Eukaryota"/>
</dbReference>
<dbReference type="GeneTree" id="ENSGT00940000159042"/>
<dbReference type="InParanoid" id="Q9Z0L3"/>
<dbReference type="OMA" id="HCEHLLC"/>
<dbReference type="OrthoDB" id="8856917at2759"/>
<dbReference type="PhylomeDB" id="Q9Z0L3"/>
<dbReference type="TreeFam" id="TF353106"/>
<dbReference type="BioGRID-ORCS" id="18256">
    <property type="hits" value="0 hits in 79 CRISPR screens"/>
</dbReference>
<dbReference type="ChiTaRS" id="Oc90">
    <property type="organism name" value="mouse"/>
</dbReference>
<dbReference type="PRO" id="PR:Q9Z0L3"/>
<dbReference type="Proteomes" id="UP000000589">
    <property type="component" value="Chromosome 15"/>
</dbReference>
<dbReference type="RNAct" id="Q9Z0L3">
    <property type="molecule type" value="protein"/>
</dbReference>
<dbReference type="Bgee" id="ENSMUSG00000015001">
    <property type="expression patterns" value="Expressed in vestibular epithelium and 25 other cell types or tissues"/>
</dbReference>
<dbReference type="ExpressionAtlas" id="Q9Z0L3">
    <property type="expression patterns" value="baseline and differential"/>
</dbReference>
<dbReference type="GO" id="GO:0031012">
    <property type="term" value="C:extracellular matrix"/>
    <property type="evidence" value="ECO:0000314"/>
    <property type="project" value="MGI"/>
</dbReference>
<dbReference type="GO" id="GO:0005576">
    <property type="term" value="C:extracellular region"/>
    <property type="evidence" value="ECO:0007669"/>
    <property type="project" value="UniProtKB-SubCell"/>
</dbReference>
<dbReference type="GO" id="GO:0005509">
    <property type="term" value="F:calcium ion binding"/>
    <property type="evidence" value="ECO:0000314"/>
    <property type="project" value="UniProtKB"/>
</dbReference>
<dbReference type="GO" id="GO:0005198">
    <property type="term" value="F:structural molecule activity"/>
    <property type="evidence" value="ECO:0000314"/>
    <property type="project" value="MGI"/>
</dbReference>
<dbReference type="GO" id="GO:0050482">
    <property type="term" value="P:arachidonate secretion"/>
    <property type="evidence" value="ECO:0007669"/>
    <property type="project" value="InterPro"/>
</dbReference>
<dbReference type="GO" id="GO:0016042">
    <property type="term" value="P:lipid catabolic process"/>
    <property type="evidence" value="ECO:0007669"/>
    <property type="project" value="InterPro"/>
</dbReference>
<dbReference type="GO" id="GO:0045299">
    <property type="term" value="P:otolith mineralization"/>
    <property type="evidence" value="ECO:0000314"/>
    <property type="project" value="UniProtKB"/>
</dbReference>
<dbReference type="GO" id="GO:0006644">
    <property type="term" value="P:phospholipid metabolic process"/>
    <property type="evidence" value="ECO:0007669"/>
    <property type="project" value="InterPro"/>
</dbReference>
<dbReference type="CDD" id="cd04707">
    <property type="entry name" value="otoconin_90"/>
    <property type="match status" value="2"/>
</dbReference>
<dbReference type="FunFam" id="1.20.90.10:FF:000006">
    <property type="entry name" value="Otoconin-90"/>
    <property type="match status" value="1"/>
</dbReference>
<dbReference type="FunFam" id="1.20.90.10:FF:000009">
    <property type="entry name" value="Otoconin-90"/>
    <property type="match status" value="1"/>
</dbReference>
<dbReference type="Gene3D" id="1.20.90.10">
    <property type="entry name" value="Phospholipase A2 domain"/>
    <property type="match status" value="2"/>
</dbReference>
<dbReference type="InterPro" id="IPR041798">
    <property type="entry name" value="Otoconin-90"/>
</dbReference>
<dbReference type="InterPro" id="IPR001211">
    <property type="entry name" value="PLipase_A2"/>
</dbReference>
<dbReference type="InterPro" id="IPR033112">
    <property type="entry name" value="PLipase_A2_Asp_AS"/>
</dbReference>
<dbReference type="InterPro" id="IPR016090">
    <property type="entry name" value="PLipase_A2_dom"/>
</dbReference>
<dbReference type="InterPro" id="IPR036444">
    <property type="entry name" value="PLipase_A2_dom_sf"/>
</dbReference>
<dbReference type="InterPro" id="IPR033113">
    <property type="entry name" value="PLipase_A2_His_AS"/>
</dbReference>
<dbReference type="PANTHER" id="PTHR11716:SF1">
    <property type="entry name" value="OTOCONIN-90"/>
    <property type="match status" value="1"/>
</dbReference>
<dbReference type="PANTHER" id="PTHR11716">
    <property type="entry name" value="PHOSPHOLIPASE A2 FAMILY MEMBER"/>
    <property type="match status" value="1"/>
</dbReference>
<dbReference type="Pfam" id="PF00068">
    <property type="entry name" value="Phospholip_A2_1"/>
    <property type="match status" value="2"/>
</dbReference>
<dbReference type="PRINTS" id="PR00389">
    <property type="entry name" value="PHPHLIPASEA2"/>
</dbReference>
<dbReference type="SMART" id="SM00085">
    <property type="entry name" value="PA2c"/>
    <property type="match status" value="2"/>
</dbReference>
<dbReference type="SUPFAM" id="SSF48619">
    <property type="entry name" value="Phospholipase A2, PLA2"/>
    <property type="match status" value="2"/>
</dbReference>
<dbReference type="PROSITE" id="PS00119">
    <property type="entry name" value="PA2_ASP"/>
    <property type="match status" value="1"/>
</dbReference>
<dbReference type="PROSITE" id="PS00118">
    <property type="entry name" value="PA2_HIS"/>
    <property type="match status" value="2"/>
</dbReference>
<organism>
    <name type="scientific">Mus musculus</name>
    <name type="common">Mouse</name>
    <dbReference type="NCBI Taxonomy" id="10090"/>
    <lineage>
        <taxon>Eukaryota</taxon>
        <taxon>Metazoa</taxon>
        <taxon>Chordata</taxon>
        <taxon>Craniata</taxon>
        <taxon>Vertebrata</taxon>
        <taxon>Euteleostomi</taxon>
        <taxon>Mammalia</taxon>
        <taxon>Eutheria</taxon>
        <taxon>Euarchontoglires</taxon>
        <taxon>Glires</taxon>
        <taxon>Rodentia</taxon>
        <taxon>Myomorpha</taxon>
        <taxon>Muroidea</taxon>
        <taxon>Muridae</taxon>
        <taxon>Murinae</taxon>
        <taxon>Mus</taxon>
        <taxon>Mus</taxon>
    </lineage>
</organism>
<protein>
    <recommendedName>
        <fullName>Otoconin-90</fullName>
        <shortName>Oc90</shortName>
    </recommendedName>
    <alternativeName>
        <fullName evidence="12">Otoconin-95</fullName>
        <shortName evidence="12">Oc95</shortName>
    </alternativeName>
</protein>
<accession>Q9Z0L3</accession>
<accession>Q9CZ60</accession>
<accession>Q9Z225</accession>
<feature type="signal peptide" evidence="9">
    <location>
        <begin position="1"/>
        <end position="17"/>
    </location>
</feature>
<feature type="chain" id="PRO_0000022994" description="Otoconin-90">
    <location>
        <begin position="18"/>
        <end position="485"/>
    </location>
</feature>
<feature type="region of interest" description="Phospholipase A2-like 1">
    <location>
        <begin position="75"/>
        <end position="189"/>
    </location>
</feature>
<feature type="region of interest" description="Phospholipase A2-like 2">
    <location>
        <begin position="315"/>
        <end position="371"/>
    </location>
</feature>
<feature type="region of interest" description="Phospholipase A2-like 3">
    <location>
        <begin position="383"/>
        <end position="435"/>
    </location>
</feature>
<feature type="region of interest" description="Disordered" evidence="4">
    <location>
        <begin position="444"/>
        <end position="485"/>
    </location>
</feature>
<feature type="glycosylation site" description="N-linked (GlcNAc...) asparagine" evidence="3">
    <location>
        <position position="37"/>
    </location>
</feature>
<feature type="glycosylation site" description="N-linked (GlcNAc...) asparagine" evidence="3">
    <location>
        <position position="178"/>
    </location>
</feature>
<feature type="glycosylation site" description="N-linked (GlcNAc...) asparagine" evidence="3">
    <location>
        <position position="288"/>
    </location>
</feature>
<feature type="glycosylation site" description="N-linked (GlcNAc...) asparagine" evidence="3">
    <location>
        <position position="417"/>
    </location>
</feature>
<feature type="disulfide bond" evidence="1">
    <location>
        <begin position="84"/>
        <end position="144"/>
    </location>
</feature>
<feature type="disulfide bond" evidence="1">
    <location>
        <begin position="98"/>
        <end position="189"/>
    </location>
</feature>
<feature type="disulfide bond" evidence="1">
    <location>
        <begin position="100"/>
        <end position="116"/>
    </location>
</feature>
<feature type="disulfide bond" evidence="1">
    <location>
        <begin position="115"/>
        <end position="171"/>
    </location>
</feature>
<feature type="disulfide bond" evidence="1">
    <location>
        <begin position="122"/>
        <end position="164"/>
    </location>
</feature>
<feature type="disulfide bond" evidence="1">
    <location>
        <begin position="131"/>
        <end position="157"/>
    </location>
</feature>
<feature type="disulfide bond" evidence="1">
    <location>
        <begin position="151"/>
        <end position="162"/>
    </location>
</feature>
<feature type="splice variant" id="VSP_004511" description="In isoform 3." evidence="12">
    <location>
        <begin position="208"/>
        <end position="240"/>
    </location>
</feature>
<feature type="splice variant" id="VSP_004510" description="In isoform 2." evidence="12">
    <location>
        <begin position="208"/>
        <end position="224"/>
    </location>
</feature>
<feature type="splice variant" id="VSP_004512" description="In isoform 5." evidence="11">
    <location>
        <begin position="225"/>
        <end position="240"/>
    </location>
</feature>
<feature type="splice variant" id="VSP_004513" description="In isoform 3." evidence="12">
    <original>K</original>
    <variation>D</variation>
    <location>
        <position position="241"/>
    </location>
</feature>
<feature type="splice variant" id="VSP_004514" description="In isoform 5." evidence="11">
    <original>K</original>
    <variation>E</variation>
    <location>
        <position position="241"/>
    </location>
</feature>
<feature type="splice variant" id="VSP_004515" description="In isoform 4." evidence="12">
    <location>
        <begin position="297"/>
        <end position="330"/>
    </location>
</feature>
<feature type="sequence conflict" description="In Ref. 1; AAD08924." evidence="13" ref="1">
    <original>I</original>
    <variation>S</variation>
    <location>
        <position position="114"/>
    </location>
</feature>
<feature type="sequence conflict" description="In Ref. 3; AA sequence." evidence="13" ref="3">
    <original>A</original>
    <variation>AA</variation>
    <location>
        <position position="297"/>
    </location>
</feature>
<feature type="sequence conflict" description="In Ref. 1; AAD08924." evidence="13" ref="1">
    <original>Q</original>
    <variation>R</variation>
    <location>
        <position position="378"/>
    </location>
</feature>
<name>OC90_MOUSE</name>
<keyword id="KW-0025">Alternative splicing</keyword>
<keyword id="KW-0106">Calcium</keyword>
<keyword id="KW-0903">Direct protein sequencing</keyword>
<keyword id="KW-1015">Disulfide bond</keyword>
<keyword id="KW-0325">Glycoprotein</keyword>
<keyword id="KW-0479">Metal-binding</keyword>
<keyword id="KW-1185">Reference proteome</keyword>
<keyword id="KW-0677">Repeat</keyword>
<keyword id="KW-0964">Secreted</keyword>
<keyword id="KW-0732">Signal</keyword>